<feature type="chain" id="PRO_0000435633" description="bZIP transcription factor 16">
    <location>
        <begin position="1"/>
        <end position="409"/>
    </location>
</feature>
<feature type="domain" description="bZIP" evidence="1">
    <location>
        <begin position="305"/>
        <end position="368"/>
    </location>
</feature>
<feature type="region of interest" description="Disordered" evidence="2">
    <location>
        <begin position="1"/>
        <end position="63"/>
    </location>
</feature>
<feature type="region of interest" description="Disordered" evidence="2">
    <location>
        <begin position="118"/>
        <end position="236"/>
    </location>
</feature>
<feature type="region of interest" description="Disordered" evidence="2">
    <location>
        <begin position="274"/>
        <end position="327"/>
    </location>
</feature>
<feature type="region of interest" description="Basic motif" evidence="1">
    <location>
        <begin position="307"/>
        <end position="326"/>
    </location>
</feature>
<feature type="region of interest" description="Leucine-zipper" evidence="1">
    <location>
        <begin position="333"/>
        <end position="368"/>
    </location>
</feature>
<feature type="region of interest" description="Disordered" evidence="2">
    <location>
        <begin position="362"/>
        <end position="409"/>
    </location>
</feature>
<feature type="short sequence motif" description="Bipartite nuclear localization signal" evidence="9">
    <location>
        <begin position="307"/>
        <end position="323"/>
    </location>
</feature>
<feature type="compositionally biased region" description="Basic and acidic residues" evidence="2">
    <location>
        <begin position="1"/>
        <end position="16"/>
    </location>
</feature>
<feature type="compositionally biased region" description="Low complexity" evidence="2">
    <location>
        <begin position="24"/>
        <end position="34"/>
    </location>
</feature>
<feature type="compositionally biased region" description="Basic and acidic residues" evidence="2">
    <location>
        <begin position="133"/>
        <end position="145"/>
    </location>
</feature>
<feature type="compositionally biased region" description="Polar residues" evidence="2">
    <location>
        <begin position="152"/>
        <end position="178"/>
    </location>
</feature>
<feature type="compositionally biased region" description="Low complexity" evidence="2">
    <location>
        <begin position="179"/>
        <end position="203"/>
    </location>
</feature>
<feature type="compositionally biased region" description="Polar residues" evidence="2">
    <location>
        <begin position="216"/>
        <end position="228"/>
    </location>
</feature>
<feature type="compositionally biased region" description="Basic and acidic residues" evidence="2">
    <location>
        <begin position="314"/>
        <end position="327"/>
    </location>
</feature>
<feature type="compositionally biased region" description="Basic and acidic residues" evidence="2">
    <location>
        <begin position="398"/>
        <end position="409"/>
    </location>
</feature>
<feature type="disulfide bond" description="Interchain" evidence="9">
    <location>
        <position position="330"/>
    </location>
</feature>
<feature type="mutagenesis site" description="Greatly enhances DNA binding activity." evidence="4">
    <original>C</original>
    <variation>L</variation>
    <location>
        <position position="330"/>
    </location>
</feature>
<feature type="mutagenesis site" description="Slightly enhances DNA binding activity." evidence="4">
    <original>C</original>
    <variation>L</variation>
    <location>
        <position position="358"/>
    </location>
</feature>
<reference key="1">
    <citation type="journal article" date="1999" name="Nature">
        <title>Sequence and analysis of chromosome 2 of the plant Arabidopsis thaliana.</title>
        <authorList>
            <person name="Lin X."/>
            <person name="Kaul S."/>
            <person name="Rounsley S.D."/>
            <person name="Shea T.P."/>
            <person name="Benito M.-I."/>
            <person name="Town C.D."/>
            <person name="Fujii C.Y."/>
            <person name="Mason T.M."/>
            <person name="Bowman C.L."/>
            <person name="Barnstead M.E."/>
            <person name="Feldblyum T.V."/>
            <person name="Buell C.R."/>
            <person name="Ketchum K.A."/>
            <person name="Lee J.J."/>
            <person name="Ronning C.M."/>
            <person name="Koo H.L."/>
            <person name="Moffat K.S."/>
            <person name="Cronin L.A."/>
            <person name="Shen M."/>
            <person name="Pai G."/>
            <person name="Van Aken S."/>
            <person name="Umayam L."/>
            <person name="Tallon L.J."/>
            <person name="Gill J.E."/>
            <person name="Adams M.D."/>
            <person name="Carrera A.J."/>
            <person name="Creasy T.H."/>
            <person name="Goodman H.M."/>
            <person name="Somerville C.R."/>
            <person name="Copenhaver G.P."/>
            <person name="Preuss D."/>
            <person name="Nierman W.C."/>
            <person name="White O."/>
            <person name="Eisen J.A."/>
            <person name="Salzberg S.L."/>
            <person name="Fraser C.M."/>
            <person name="Venter J.C."/>
        </authorList>
    </citation>
    <scope>NUCLEOTIDE SEQUENCE [LARGE SCALE GENOMIC DNA]</scope>
    <source>
        <strain>cv. Columbia</strain>
    </source>
</reference>
<reference key="2">
    <citation type="journal article" date="2017" name="Plant J.">
        <title>Araport11: a complete reannotation of the Arabidopsis thaliana reference genome.</title>
        <authorList>
            <person name="Cheng C.Y."/>
            <person name="Krishnakumar V."/>
            <person name="Chan A.P."/>
            <person name="Thibaud-Nissen F."/>
            <person name="Schobel S."/>
            <person name="Town C.D."/>
        </authorList>
    </citation>
    <scope>GENOME REANNOTATION</scope>
    <source>
        <strain>cv. Columbia</strain>
    </source>
</reference>
<reference key="3">
    <citation type="submission" date="2006-08" db="EMBL/GenBank/DDBJ databases">
        <title>Arabidopsis ORF Clones.</title>
        <authorList>
            <person name="Quinitio C."/>
            <person name="Chen H."/>
            <person name="Kim C.J."/>
            <person name="Shinn P."/>
            <person name="Ecker J.R."/>
        </authorList>
    </citation>
    <scope>NUCLEOTIDE SEQUENCE [LARGE SCALE MRNA]</scope>
    <source>
        <strain>cv. Columbia</strain>
    </source>
</reference>
<reference key="4">
    <citation type="submission" date="2009-03" db="EMBL/GenBank/DDBJ databases">
        <title>ORF cloning and analysis of Arabidopsis transcription factor genes.</title>
        <authorList>
            <person name="Fujita M."/>
            <person name="Mizukado S."/>
            <person name="Seki M."/>
            <person name="Shinozaki K."/>
            <person name="Mitsuda N."/>
            <person name="Takiguchi Y."/>
            <person name="Takagi M."/>
        </authorList>
    </citation>
    <scope>NUCLEOTIDE SEQUENCE [LARGE SCALE MRNA]</scope>
</reference>
<reference key="5">
    <citation type="journal article" date="2002" name="Trends Plant Sci.">
        <title>bZIP transcription factors in Arabidopsis.</title>
        <authorList>
            <person name="Jakoby M."/>
            <person name="Weisshaar B."/>
            <person name="Droege-Laser W."/>
            <person name="Vicente-Carbajosa J."/>
            <person name="Tiedemann J."/>
            <person name="Kroj T."/>
            <person name="Parcy F."/>
        </authorList>
    </citation>
    <scope>GENE FAMILY</scope>
    <scope>NOMENCLATURE</scope>
</reference>
<reference key="6">
    <citation type="journal article" date="2008" name="BMB Rep.">
        <title>AtbZIP16 and AtbZIP68, two new members of GBFs, can interact with other G group bZIPs in Arabidopsis thaliana.</title>
        <authorList>
            <person name="Shen H."/>
            <person name="Cao K."/>
            <person name="Wang X."/>
        </authorList>
    </citation>
    <scope>FUNCTION</scope>
    <scope>SUBUNIT</scope>
    <scope>INTERACTION WITH BZIP68; GBF1/BZIP41; GBF2/BZIP54 AND GBF3/BZIP55</scope>
    <scope>SUBCELLULAR LOCATION</scope>
</reference>
<reference key="7">
    <citation type="journal article" date="2009" name="Plant Physiol.">
        <title>Large-scale Arabidopsis phosphoproteome profiling reveals novel chloroplast kinase substrates and phosphorylation networks.</title>
        <authorList>
            <person name="Reiland S."/>
            <person name="Messerli G."/>
            <person name="Baerenfaller K."/>
            <person name="Gerrits B."/>
            <person name="Endler A."/>
            <person name="Grossmann J."/>
            <person name="Gruissem W."/>
            <person name="Baginsky S."/>
        </authorList>
    </citation>
    <scope>IDENTIFICATION BY MASS SPECTROMETRY [LARGE SCALE ANALYSIS]</scope>
</reference>
<reference key="8">
    <citation type="journal article" date="2012" name="J. Biol. Chem.">
        <title>Redox-mediated mechanisms regulate DNA binding activity of the G-group of basic region leucine zipper (bZIP) transcription factors in Arabidopsis.</title>
        <authorList>
            <person name="Shaikhali J."/>
            <person name="Noren L."/>
            <person name="de Dios Barajas-Lopez J."/>
            <person name="Srivastava V."/>
            <person name="Koenig J."/>
            <person name="Sauer U.H."/>
            <person name="Wingsle G."/>
            <person name="Dietz K.J."/>
            <person name="Strand A."/>
        </authorList>
    </citation>
    <scope>IDENTIFICATION BY MASS SPECTROMETRY</scope>
    <scope>FUNCTION</scope>
    <scope>INTERACTION WITH BZIP68 AND GBF1/BZIP41</scope>
    <scope>SUBCELLULAR LOCATION</scope>
    <scope>DISULFIDE BOND</scope>
    <scope>MUTAGENESIS OF CYS-330 AND CYS-358</scope>
</reference>
<reference key="9">
    <citation type="journal article" date="2015" name="Protoplasma">
        <title>GIP1 protein is a novel cofactor that regulates DNA-binding affinity of redox-regulated members of bZIP transcription factors involved in the early stages of Arabidopsis development.</title>
        <authorList>
            <person name="Shaikhali J."/>
        </authorList>
    </citation>
    <scope>INTERACTION WITH GIP1</scope>
</reference>
<name>BZP16_ARATH</name>
<sequence>MASNEMEKSSKEKEPKTPPPSSTAPPSSQEPSSAVSAGMATPDWSGFQAYSPMPPPHGYVASSPQPHPYMWGVQHMMPPYGTPPHPYVAMYPPGGMYAHPSMPPGSYPYSPYAMPSPNGMTEVSGNTTGGTDGDAKQSEVKEKLPIKRSRGSLGSLNMITGKNNEPGKNSGASANGAYSKSGESASDGSSEGSDGNSQNDSGSGLDGKDAEAASENGGSANGPQNGSAGTPILPVSQTVPIMPMTAAGVPGPPTNLNIGMDYWGAPTSAGIPGMHGKVSTPVPGVVAPGSRDGGHSQPWLQDDRELKRQRRKQSNRESARRSRLRKQAECDELAQRAEVLNEENTNLRAEINKLKSQCEELTTENTSLKDQLSLFPPLEGISMDNDHQEPDTNQTGAAERKVDSYKDST</sequence>
<dbReference type="EMBL" id="AC005314">
    <property type="protein sequence ID" value="AAC36168.1"/>
    <property type="status" value="ALT_SEQ"/>
    <property type="molecule type" value="Genomic_DNA"/>
</dbReference>
<dbReference type="EMBL" id="CP002685">
    <property type="protein sequence ID" value="AEC09118.1"/>
    <property type="molecule type" value="Genomic_DNA"/>
</dbReference>
<dbReference type="EMBL" id="BT022055">
    <property type="protein sequence ID" value="AAY25467.1"/>
    <property type="molecule type" value="mRNA"/>
</dbReference>
<dbReference type="EMBL" id="BT026441">
    <property type="protein sequence ID" value="ABH04548.1"/>
    <property type="molecule type" value="mRNA"/>
</dbReference>
<dbReference type="EMBL" id="AB493577">
    <property type="protein sequence ID" value="BAH30415.1"/>
    <property type="molecule type" value="mRNA"/>
</dbReference>
<dbReference type="PIR" id="G84769">
    <property type="entry name" value="G84769"/>
</dbReference>
<dbReference type="RefSeq" id="NP_850248.2">
    <property type="nucleotide sequence ID" value="NM_179917.4"/>
</dbReference>
<dbReference type="SMR" id="Q501B2"/>
<dbReference type="FunCoup" id="Q501B2">
    <property type="interactions" value="1372"/>
</dbReference>
<dbReference type="IntAct" id="Q501B2">
    <property type="interactions" value="5"/>
</dbReference>
<dbReference type="STRING" id="3702.Q501B2"/>
<dbReference type="GlyGen" id="Q501B2">
    <property type="glycosylation" value="1 site"/>
</dbReference>
<dbReference type="iPTMnet" id="Q501B2"/>
<dbReference type="PaxDb" id="3702-AT2G35530.1"/>
<dbReference type="ProteomicsDB" id="239130"/>
<dbReference type="EnsemblPlants" id="AT2G35530.1">
    <property type="protein sequence ID" value="AT2G35530.1"/>
    <property type="gene ID" value="AT2G35530"/>
</dbReference>
<dbReference type="GeneID" id="818118"/>
<dbReference type="Gramene" id="AT2G35530.1">
    <property type="protein sequence ID" value="AT2G35530.1"/>
    <property type="gene ID" value="AT2G35530"/>
</dbReference>
<dbReference type="KEGG" id="ath:AT2G35530"/>
<dbReference type="Araport" id="AT2G35530"/>
<dbReference type="TAIR" id="AT2G35530">
    <property type="gene designation" value="BZIP16"/>
</dbReference>
<dbReference type="eggNOG" id="ENOG502QUJX">
    <property type="taxonomic scope" value="Eukaryota"/>
</dbReference>
<dbReference type="HOGENOM" id="CLU_036349_0_0_1"/>
<dbReference type="InParanoid" id="Q501B2"/>
<dbReference type="OMA" id="GTINPDW"/>
<dbReference type="OrthoDB" id="1642657at2759"/>
<dbReference type="PhylomeDB" id="Q501B2"/>
<dbReference type="PRO" id="PR:Q501B2"/>
<dbReference type="Proteomes" id="UP000006548">
    <property type="component" value="Chromosome 2"/>
</dbReference>
<dbReference type="ExpressionAtlas" id="Q501B2">
    <property type="expression patterns" value="baseline and differential"/>
</dbReference>
<dbReference type="GO" id="GO:0005634">
    <property type="term" value="C:nucleus"/>
    <property type="evidence" value="ECO:0000314"/>
    <property type="project" value="TAIR"/>
</dbReference>
<dbReference type="GO" id="GO:0003700">
    <property type="term" value="F:DNA-binding transcription factor activity"/>
    <property type="evidence" value="ECO:0000250"/>
    <property type="project" value="TAIR"/>
</dbReference>
<dbReference type="GO" id="GO:0042802">
    <property type="term" value="F:identical protein binding"/>
    <property type="evidence" value="ECO:0000353"/>
    <property type="project" value="UniProtKB"/>
</dbReference>
<dbReference type="GO" id="GO:0043565">
    <property type="term" value="F:sequence-specific DNA binding"/>
    <property type="evidence" value="ECO:0000314"/>
    <property type="project" value="TAIR"/>
</dbReference>
<dbReference type="GO" id="GO:0000976">
    <property type="term" value="F:transcription cis-regulatory region binding"/>
    <property type="evidence" value="ECO:0000353"/>
    <property type="project" value="TAIR"/>
</dbReference>
<dbReference type="GO" id="GO:0045893">
    <property type="term" value="P:positive regulation of DNA-templated transcription"/>
    <property type="evidence" value="ECO:0000314"/>
    <property type="project" value="TAIR"/>
</dbReference>
<dbReference type="CDD" id="cd14702">
    <property type="entry name" value="bZIP_plant_GBF1"/>
    <property type="match status" value="1"/>
</dbReference>
<dbReference type="Gene3D" id="1.20.5.170">
    <property type="match status" value="1"/>
</dbReference>
<dbReference type="InterPro" id="IPR004827">
    <property type="entry name" value="bZIP"/>
</dbReference>
<dbReference type="InterPro" id="IPR045314">
    <property type="entry name" value="bZIP_plant_GBF1"/>
</dbReference>
<dbReference type="InterPro" id="IPR046347">
    <property type="entry name" value="bZIP_sf"/>
</dbReference>
<dbReference type="InterPro" id="IPR044827">
    <property type="entry name" value="GBF-like"/>
</dbReference>
<dbReference type="InterPro" id="IPR012900">
    <property type="entry name" value="MFMR"/>
</dbReference>
<dbReference type="PANTHER" id="PTHR45967:SF7">
    <property type="entry name" value="BZIP TRANSCRIPTION FACTOR 16"/>
    <property type="match status" value="1"/>
</dbReference>
<dbReference type="PANTHER" id="PTHR45967">
    <property type="entry name" value="G-BOX-BINDING FACTOR 3-RELATED"/>
    <property type="match status" value="1"/>
</dbReference>
<dbReference type="Pfam" id="PF00170">
    <property type="entry name" value="bZIP_1"/>
    <property type="match status" value="1"/>
</dbReference>
<dbReference type="Pfam" id="PF07777">
    <property type="entry name" value="MFMR"/>
    <property type="match status" value="1"/>
</dbReference>
<dbReference type="Pfam" id="PF16596">
    <property type="entry name" value="MFMR_assoc"/>
    <property type="match status" value="1"/>
</dbReference>
<dbReference type="SMART" id="SM00338">
    <property type="entry name" value="BRLZ"/>
    <property type="match status" value="1"/>
</dbReference>
<dbReference type="SUPFAM" id="SSF57959">
    <property type="entry name" value="Leucine zipper domain"/>
    <property type="match status" value="1"/>
</dbReference>
<dbReference type="PROSITE" id="PS50217">
    <property type="entry name" value="BZIP"/>
    <property type="match status" value="1"/>
</dbReference>
<dbReference type="PROSITE" id="PS00036">
    <property type="entry name" value="BZIP_BASIC"/>
    <property type="match status" value="1"/>
</dbReference>
<keyword id="KW-0010">Activator</keyword>
<keyword id="KW-1015">Disulfide bond</keyword>
<keyword id="KW-0238">DNA-binding</keyword>
<keyword id="KW-0539">Nucleus</keyword>
<keyword id="KW-1185">Reference proteome</keyword>
<keyword id="KW-0678">Repressor</keyword>
<keyword id="KW-0804">Transcription</keyword>
<keyword id="KW-0805">Transcription regulation</keyword>
<proteinExistence type="evidence at protein level"/>
<comment type="function">
    <text evidence="3 4 8">Transcriptional activator that binds to the G-box motif (5'-CACGTG-3') and other cis-acting elements with 5'-ACGT-3' core, such as Hex, C-box and as-1 motifs. Possesses high binding affinity to G-box, much lower affinity to Hex and C-box, and little affinity to as-1 element (PubMed:18315949). G-box and G-box-like motifs are cis-acting elements defined in promoters of certain plant genes which are regulated by such diverse stimuli as light-induction or hormone control (Probable). Binds to the G-box motif 5'-CACGTG-3' of LHCB2.4 (At3g27690) promoter. May act as transcriptional repressor in light-regulated expression of LHCB2.4. Binds DNA as monomer. DNA-binding activity is redox-dependent (PubMed:22718771).</text>
</comment>
<comment type="subunit">
    <text evidence="3 4 5">Monomer, homodimer and heterodimers with BZIP68 and GBF1/BZIP41 (PubMed:18315949, PubMed:22718771). Heterodimers with GBF2/BZIP54 and GBF3/BZIP55 (PubMed:18315949). Binds DNA as monomer and forms homo- and heterodimers. The monomeric form is redox regulated (PubMed:22718771). Interacts with GIP1 (PubMed:25387999).</text>
</comment>
<comment type="subcellular location">
    <subcellularLocation>
        <location evidence="3 4">Nucleus</location>
    </subcellularLocation>
</comment>
<comment type="domain">
    <text evidence="3">The N-terminal region is necessary for its transcriptional activity.</text>
</comment>
<comment type="similarity">
    <text evidence="7">Belongs to the bZIP family.</text>
</comment>
<comment type="sequence caution" evidence="7">
    <conflict type="erroneous gene model prediction">
        <sequence resource="EMBL-CDS" id="AAC36168"/>
    </conflict>
</comment>
<accession>Q501B2</accession>
<accession>O82288</accession>
<gene>
    <name evidence="6" type="primary">BZIP16</name>
    <name evidence="10" type="ordered locus">At2g35530</name>
</gene>
<evidence type="ECO:0000255" key="1">
    <source>
        <dbReference type="PROSITE-ProRule" id="PRU00978"/>
    </source>
</evidence>
<evidence type="ECO:0000256" key="2">
    <source>
        <dbReference type="SAM" id="MobiDB-lite"/>
    </source>
</evidence>
<evidence type="ECO:0000269" key="3">
    <source>
    </source>
</evidence>
<evidence type="ECO:0000269" key="4">
    <source>
    </source>
</evidence>
<evidence type="ECO:0000269" key="5">
    <source>
    </source>
</evidence>
<evidence type="ECO:0000303" key="6">
    <source>
    </source>
</evidence>
<evidence type="ECO:0000305" key="7"/>
<evidence type="ECO:0000305" key="8">
    <source>
    </source>
</evidence>
<evidence type="ECO:0000305" key="9">
    <source>
    </source>
</evidence>
<evidence type="ECO:0000312" key="10">
    <source>
        <dbReference type="Araport" id="AT2G35530"/>
    </source>
</evidence>
<protein>
    <recommendedName>
        <fullName evidence="7">bZIP transcription factor 16</fullName>
        <shortName evidence="6">AtbZIP16</shortName>
    </recommendedName>
</protein>
<organism>
    <name type="scientific">Arabidopsis thaliana</name>
    <name type="common">Mouse-ear cress</name>
    <dbReference type="NCBI Taxonomy" id="3702"/>
    <lineage>
        <taxon>Eukaryota</taxon>
        <taxon>Viridiplantae</taxon>
        <taxon>Streptophyta</taxon>
        <taxon>Embryophyta</taxon>
        <taxon>Tracheophyta</taxon>
        <taxon>Spermatophyta</taxon>
        <taxon>Magnoliopsida</taxon>
        <taxon>eudicotyledons</taxon>
        <taxon>Gunneridae</taxon>
        <taxon>Pentapetalae</taxon>
        <taxon>rosids</taxon>
        <taxon>malvids</taxon>
        <taxon>Brassicales</taxon>
        <taxon>Brassicaceae</taxon>
        <taxon>Camelineae</taxon>
        <taxon>Arabidopsis</taxon>
    </lineage>
</organism>